<feature type="initiator methionine" description="Removed" evidence="8">
    <location>
        <position position="1"/>
    </location>
</feature>
<feature type="chain" id="PRO_0000420952" description="Brefeldin A-inhibited guanine nucleotide-exchange protein 3">
    <location>
        <begin position="2"/>
        <end position="1750"/>
    </location>
</feature>
<feature type="domain" description="SEC7" evidence="3">
    <location>
        <begin position="601"/>
        <end position="788"/>
    </location>
</feature>
<feature type="region of interest" description="Disordered" evidence="4">
    <location>
        <begin position="44"/>
        <end position="65"/>
    </location>
</feature>
<feature type="region of interest" description="Disordered" evidence="4">
    <location>
        <begin position="565"/>
        <end position="596"/>
    </location>
</feature>
<feature type="compositionally biased region" description="Polar residues" evidence="4">
    <location>
        <begin position="47"/>
        <end position="61"/>
    </location>
</feature>
<feature type="compositionally biased region" description="Basic and acidic residues" evidence="4">
    <location>
        <begin position="565"/>
        <end position="588"/>
    </location>
</feature>
<feature type="active site" evidence="2">
    <location>
        <position position="703"/>
    </location>
</feature>
<feature type="modified residue" description="N-acetylalanine" evidence="8">
    <location>
        <position position="2"/>
    </location>
</feature>
<feature type="modified residue" description="Phosphoserine" evidence="7">
    <location>
        <position position="586"/>
    </location>
</feature>
<feature type="modified residue" description="Phosphoserine" evidence="6">
    <location>
        <position position="1307"/>
    </location>
</feature>
<organism>
    <name type="scientific">Arabidopsis thaliana</name>
    <name type="common">Mouse-ear cress</name>
    <dbReference type="NCBI Taxonomy" id="3702"/>
    <lineage>
        <taxon>Eukaryota</taxon>
        <taxon>Viridiplantae</taxon>
        <taxon>Streptophyta</taxon>
        <taxon>Embryophyta</taxon>
        <taxon>Tracheophyta</taxon>
        <taxon>Spermatophyta</taxon>
        <taxon>Magnoliopsida</taxon>
        <taxon>eudicotyledons</taxon>
        <taxon>Gunneridae</taxon>
        <taxon>Pentapetalae</taxon>
        <taxon>rosids</taxon>
        <taxon>malvids</taxon>
        <taxon>Brassicales</taxon>
        <taxon>Brassicaceae</taxon>
        <taxon>Camelineae</taxon>
        <taxon>Arabidopsis</taxon>
    </lineage>
</organism>
<reference key="1">
    <citation type="journal article" date="2000" name="Nature">
        <title>Sequence and analysis of chromosome 1 of the plant Arabidopsis thaliana.</title>
        <authorList>
            <person name="Theologis A."/>
            <person name="Ecker J.R."/>
            <person name="Palm C.J."/>
            <person name="Federspiel N.A."/>
            <person name="Kaul S."/>
            <person name="White O."/>
            <person name="Alonso J."/>
            <person name="Altafi H."/>
            <person name="Araujo R."/>
            <person name="Bowman C.L."/>
            <person name="Brooks S.Y."/>
            <person name="Buehler E."/>
            <person name="Chan A."/>
            <person name="Chao Q."/>
            <person name="Chen H."/>
            <person name="Cheuk R.F."/>
            <person name="Chin C.W."/>
            <person name="Chung M.K."/>
            <person name="Conn L."/>
            <person name="Conway A.B."/>
            <person name="Conway A.R."/>
            <person name="Creasy T.H."/>
            <person name="Dewar K."/>
            <person name="Dunn P."/>
            <person name="Etgu P."/>
            <person name="Feldblyum T.V."/>
            <person name="Feng J.-D."/>
            <person name="Fong B."/>
            <person name="Fujii C.Y."/>
            <person name="Gill J.E."/>
            <person name="Goldsmith A.D."/>
            <person name="Haas B."/>
            <person name="Hansen N.F."/>
            <person name="Hughes B."/>
            <person name="Huizar L."/>
            <person name="Hunter J.L."/>
            <person name="Jenkins J."/>
            <person name="Johnson-Hopson C."/>
            <person name="Khan S."/>
            <person name="Khaykin E."/>
            <person name="Kim C.J."/>
            <person name="Koo H.L."/>
            <person name="Kremenetskaia I."/>
            <person name="Kurtz D.B."/>
            <person name="Kwan A."/>
            <person name="Lam B."/>
            <person name="Langin-Hooper S."/>
            <person name="Lee A."/>
            <person name="Lee J.M."/>
            <person name="Lenz C.A."/>
            <person name="Li J.H."/>
            <person name="Li Y.-P."/>
            <person name="Lin X."/>
            <person name="Liu S.X."/>
            <person name="Liu Z.A."/>
            <person name="Luros J.S."/>
            <person name="Maiti R."/>
            <person name="Marziali A."/>
            <person name="Militscher J."/>
            <person name="Miranda M."/>
            <person name="Nguyen M."/>
            <person name="Nierman W.C."/>
            <person name="Osborne B.I."/>
            <person name="Pai G."/>
            <person name="Peterson J."/>
            <person name="Pham P.K."/>
            <person name="Rizzo M."/>
            <person name="Rooney T."/>
            <person name="Rowley D."/>
            <person name="Sakano H."/>
            <person name="Salzberg S.L."/>
            <person name="Schwartz J.R."/>
            <person name="Shinn P."/>
            <person name="Southwick A.M."/>
            <person name="Sun H."/>
            <person name="Tallon L.J."/>
            <person name="Tambunga G."/>
            <person name="Toriumi M.J."/>
            <person name="Town C.D."/>
            <person name="Utterback T."/>
            <person name="Van Aken S."/>
            <person name="Vaysberg M."/>
            <person name="Vysotskaia V.S."/>
            <person name="Walker M."/>
            <person name="Wu D."/>
            <person name="Yu G."/>
            <person name="Fraser C.M."/>
            <person name="Venter J.C."/>
            <person name="Davis R.W."/>
        </authorList>
    </citation>
    <scope>NUCLEOTIDE SEQUENCE [LARGE SCALE GENOMIC DNA]</scope>
    <source>
        <strain>cv. Columbia</strain>
    </source>
</reference>
<reference key="2">
    <citation type="journal article" date="2017" name="Plant J.">
        <title>Araport11: a complete reannotation of the Arabidopsis thaliana reference genome.</title>
        <authorList>
            <person name="Cheng C.Y."/>
            <person name="Krishnakumar V."/>
            <person name="Chan A.P."/>
            <person name="Thibaud-Nissen F."/>
            <person name="Schobel S."/>
            <person name="Town C.D."/>
        </authorList>
    </citation>
    <scope>GENOME REANNOTATION</scope>
    <source>
        <strain>cv. Columbia</strain>
    </source>
</reference>
<reference key="3">
    <citation type="journal article" date="2003" name="Cell">
        <title>The Arabidopsis GNOM ARF-GEF mediates endosomal recycling, auxin transport, and auxin-dependent plant growth.</title>
        <authorList>
            <person name="Geldner N."/>
            <person name="Anders N."/>
            <person name="Wolters H."/>
            <person name="Keicher J."/>
            <person name="Kornberger W."/>
            <person name="Muller P."/>
            <person name="Delbarre A."/>
            <person name="Ueda T."/>
            <person name="Nakano A."/>
            <person name="Juergens G."/>
        </authorList>
    </citation>
    <scope>GENE FAMILY</scope>
</reference>
<reference key="4">
    <citation type="journal article" date="2004" name="Mol. Biol. Cell">
        <title>Phylogenetic analysis of Sec7-domain-containing Arf nucleotide exchangers.</title>
        <authorList>
            <person name="Cox R."/>
            <person name="Mason-Gamer R.J."/>
            <person name="Jackson C.L."/>
            <person name="Segev N."/>
        </authorList>
    </citation>
    <scope>GENE FAMILY</scope>
    <scope>NOMENCLATURE</scope>
</reference>
<reference key="5">
    <citation type="journal article" date="2005" name="Development">
        <title>Genetic and molecular identification of genes required for female gametophyte development and function in Arabidopsis.</title>
        <authorList>
            <person name="Pagnussat G.C."/>
            <person name="Yu H.-J."/>
            <person name="Ngo Q.A."/>
            <person name="Rajani S."/>
            <person name="Mayalagu S."/>
            <person name="Johnson C.S."/>
            <person name="Capron A."/>
            <person name="Xie L.-F."/>
            <person name="Ye D."/>
            <person name="Sundaresan V."/>
        </authorList>
    </citation>
    <scope>FUNCTION</scope>
    <scope>DISRUPTION PHENOTYPE</scope>
</reference>
<reference key="6">
    <citation type="journal article" date="2007" name="Nature">
        <title>Functional diversification of closely related ARF-GEFs in protein secretion and recycling.</title>
        <authorList>
            <person name="Richter S."/>
            <person name="Geldner N."/>
            <person name="Schrader J."/>
            <person name="Wolters H."/>
            <person name="Stierhof Y.D."/>
            <person name="Rios G."/>
            <person name="Koncz C."/>
            <person name="Robinson D.G."/>
            <person name="Juergens G."/>
        </authorList>
    </citation>
    <scope>GENE FAMILY</scope>
</reference>
<reference key="7">
    <citation type="journal article" date="2008" name="J. Proteome Res.">
        <title>Site-specific phosphorylation profiling of Arabidopsis proteins by mass spectrometry and peptide chip analysis.</title>
        <authorList>
            <person name="de la Fuente van Bentem S."/>
            <person name="Anrather D."/>
            <person name="Dohnal I."/>
            <person name="Roitinger E."/>
            <person name="Csaszar E."/>
            <person name="Joore J."/>
            <person name="Buijnink J."/>
            <person name="Carreri A."/>
            <person name="Forzani C."/>
            <person name="Lorkovic Z.J."/>
            <person name="Barta A."/>
            <person name="Lecourieux D."/>
            <person name="Verhounig A."/>
            <person name="Jonak C."/>
            <person name="Hirt H."/>
        </authorList>
    </citation>
    <scope>PHOSPHORYLATION [LARGE SCALE ANALYSIS] AT SER-1307</scope>
    <scope>IDENTIFICATION BY MASS SPECTROMETRY [LARGE SCALE ANALYSIS]</scope>
    <source>
        <tissue>Root</tissue>
    </source>
</reference>
<reference key="8">
    <citation type="journal article" date="2009" name="J. Proteomics">
        <title>Phosphoproteomic analysis of nuclei-enriched fractions from Arabidopsis thaliana.</title>
        <authorList>
            <person name="Jones A.M.E."/>
            <person name="MacLean D."/>
            <person name="Studholme D.J."/>
            <person name="Serna-Sanz A."/>
            <person name="Andreasson E."/>
            <person name="Rathjen J.P."/>
            <person name="Peck S.C."/>
        </authorList>
    </citation>
    <scope>IDENTIFICATION BY MASS SPECTROMETRY [LARGE SCALE ANALYSIS]</scope>
    <source>
        <strain>cv. Columbia</strain>
    </source>
</reference>
<reference key="9">
    <citation type="journal article" date="2009" name="Plant Physiol.">
        <title>Large-scale Arabidopsis phosphoproteome profiling reveals novel chloroplast kinase substrates and phosphorylation networks.</title>
        <authorList>
            <person name="Reiland S."/>
            <person name="Messerli G."/>
            <person name="Baerenfaller K."/>
            <person name="Gerrits B."/>
            <person name="Endler A."/>
            <person name="Grossmann J."/>
            <person name="Gruissem W."/>
            <person name="Baginsky S."/>
        </authorList>
    </citation>
    <scope>PHOSPHORYLATION [LARGE SCALE ANALYSIS] AT SER-586</scope>
    <scope>IDENTIFICATION BY MASS SPECTROMETRY [LARGE SCALE ANALYSIS]</scope>
</reference>
<reference key="10">
    <citation type="journal article" date="2012" name="Mol. Cell. Proteomics">
        <title>Comparative large-scale characterisation of plant vs. mammal proteins reveals similar and idiosyncratic N-alpha acetylation features.</title>
        <authorList>
            <person name="Bienvenut W.V."/>
            <person name="Sumpton D."/>
            <person name="Martinez A."/>
            <person name="Lilla S."/>
            <person name="Espagne C."/>
            <person name="Meinnel T."/>
            <person name="Giglione C."/>
        </authorList>
    </citation>
    <scope>ACETYLATION [LARGE SCALE ANALYSIS] AT ALA-2</scope>
    <scope>CLEAVAGE OF INITIATOR METHIONINE [LARGE SCALE ANALYSIS]</scope>
    <scope>IDENTIFICATION BY MASS SPECTROMETRY [LARGE SCALE ANALYSIS]</scope>
</reference>
<sequence>MASTEVDSRLGRVVIPALDKVIKNASWRKHSKLAHECKSVIERLRSPENSSPVADSESGSSIPGPLHDGGAAEYSLAESEIILSPLINASSTGVLKIVDPAVDCIQKLIAHGYVRGEADPTGGPEALLLSKLIETICKCHELDDEGLELLVLKTLLTAVTSISLRIHGDSLLQIVRTCYGIYLGSRNVVNQATAKASLVQMSVIVFRRMEADSSTVPIQPIVVAELMEPMDKSESDPSTTQSVQGFITKIMQDIDGVFNSANAKGTFGGHDGAFETSLPGTANPTDLLDSTDKDMLDAKYWEISMYKSALEGRKGELADGEVEKDDDSEVQIGNKLRRDAFLVFRALCKLSMKTPPKEDPELMRGKIVALELLKILLENAGAVFRTSDRFLGAIKQYLCLSLLKNSASNLMIIFQLSCSILLSLVSRFRAGLKAEIGVFFPMIVLRVLENVAQPDFQQKMIVLRFLDKLCVDSQILVDIFINYDCDVNSSNIFERMVNGLLKTAQGVPPGTVTTLLPPQEAAMKLEAMKCLVAVLRSMGDWVNKQLRLPDPYSAKMLEIVDRNLEEGSHPVENGKGDGGHGGFERSDSQSELSSGNSDALAIEQRRAYKLELQEGISIFNQKPKKGIEFLIKANKVGDSPEEIAAFLKDASGLNKTLIGDYLGEREDLSLKVMHAYVDSFEFQGMEFDEAIRAFLRGFRLPGEAQKIDRIMEKFAERFCKCNPKDFSSADTAYVLAYSVILLNTDAHNPMVKSKMTADGFIRNNRGIDDGKDLPEEYLRALYERISRNEIKMKDDGLGPQQKQPTNSSRLLGLDTILNIVVPRRGDDMNMETSDDLIRHMQERFKEKARKSESVYYAASDVIILRFMVEVCWAPMLAAFSVPLDQSDDAVITTLCLEGFHHAIHVTSVMSLKTHRDAFVTSLAKFTSLHSPADIKQKNIEAIKAIVKLAEEEGNYLQDAWEHILTCVSRFEHLHLLGEGAPPDATFFAFPQTESGNSPLAKPNSVPAIKERAPGKLQYAASAMIRGSYDGSGVAGKASNTVTSEQMNNLISNLNLLEQVGDMSRIFTRSQRLNSEAIIDFVKALCKVSMDELRSPSDPRVFSLTKIVEIAHYNMNRIRLVWSSIWHVLSDFFVTIGCSDNLSIAIFAMDSLRQLSMKFLEREELANYNFQNEFMKPFVVVMRKSGAVEIRELIIRCVSQMVLSRVDNVKSGWKSMFMIFTTAAHDAHKNIVFLSFEMVEKIIRDYFPHITETETTTFTDCVNCLVAFTNCKFEKDISLQAIAFLQYCARKLAEGYVGSSLRRNPPLSPQGGKIGKQDSGKFLESDEHLYSWFPLLAGLSELSFDPRAEIRKVALKVLFDTLRNHGDHFSLALWERVFESVLFRIFDYVRQDVDPSEDDSTDQRGYNGEVDQESWLYETCSLALQLVVDLFVNFYKTVNPLLKKVLMLFVSLIKRPHQSLAGAGIAALVRLMRDVGHQFSNEQWLEVVSCIKEAADATSPDFSYVTSEDLMEDVSNEDETNDNSNDALRRRNRQLHAVVTDAKSKASIQIFVIQAVTDIYDMYRMSLTANHMLMLFDAMHGIGSNAHKINADLLLRSKLQELGSSLESQEAPLLRLENESFQTCMTFLDNLISDQPVGYNEAEIESHLISLCREVLEFYINISCSKEQSSRWAVPSGSGKKKELTARAPLVVAAIQTLGNMGESLFKKNLPELFPLIATLISCEHGSGEVQVALSDMLQTSMGPVLLRSCC</sequence>
<gene>
    <name type="primary">BIG3</name>
    <name type="synonym">EDA10</name>
    <name type="ordered locus">At1g01960</name>
    <name type="ORF">F22M8.9</name>
</gene>
<evidence type="ECO:0000250" key="1"/>
<evidence type="ECO:0000255" key="2"/>
<evidence type="ECO:0000255" key="3">
    <source>
        <dbReference type="PROSITE-ProRule" id="PRU00189"/>
    </source>
</evidence>
<evidence type="ECO:0000256" key="4">
    <source>
        <dbReference type="SAM" id="MobiDB-lite"/>
    </source>
</evidence>
<evidence type="ECO:0000269" key="5">
    <source>
    </source>
</evidence>
<evidence type="ECO:0007744" key="6">
    <source>
    </source>
</evidence>
<evidence type="ECO:0007744" key="7">
    <source>
    </source>
</evidence>
<evidence type="ECO:0007744" key="8">
    <source>
    </source>
</evidence>
<name>BIG3_ARATH</name>
<dbReference type="EMBL" id="AC020622">
    <property type="protein sequence ID" value="AAF76474.1"/>
    <property type="molecule type" value="Genomic_DNA"/>
</dbReference>
<dbReference type="EMBL" id="CP002684">
    <property type="protein sequence ID" value="AEE27360.1"/>
    <property type="molecule type" value="Genomic_DNA"/>
</dbReference>
<dbReference type="PIR" id="E86151">
    <property type="entry name" value="E86151"/>
</dbReference>
<dbReference type="RefSeq" id="NP_171698.1">
    <property type="nucleotide sequence ID" value="NM_100076.3"/>
</dbReference>
<dbReference type="SMR" id="Q9LPC5"/>
<dbReference type="BioGRID" id="24536">
    <property type="interactions" value="1"/>
</dbReference>
<dbReference type="FunCoup" id="Q9LPC5">
    <property type="interactions" value="4753"/>
</dbReference>
<dbReference type="STRING" id="3702.Q9LPC5"/>
<dbReference type="iPTMnet" id="Q9LPC5"/>
<dbReference type="PaxDb" id="3702-AT1G01960.1"/>
<dbReference type="ProMEX" id="Q9LPC5"/>
<dbReference type="ProteomicsDB" id="240428"/>
<dbReference type="EnsemblPlants" id="AT1G01960.1">
    <property type="protein sequence ID" value="AT1G01960.1"/>
    <property type="gene ID" value="AT1G01960"/>
</dbReference>
<dbReference type="GeneID" id="839301"/>
<dbReference type="Gramene" id="AT1G01960.1">
    <property type="protein sequence ID" value="AT1G01960.1"/>
    <property type="gene ID" value="AT1G01960"/>
</dbReference>
<dbReference type="KEGG" id="ath:AT1G01960"/>
<dbReference type="Araport" id="AT1G01960"/>
<dbReference type="TAIR" id="AT1G01960">
    <property type="gene designation" value="EDA10"/>
</dbReference>
<dbReference type="eggNOG" id="KOG0929">
    <property type="taxonomic scope" value="Eukaryota"/>
</dbReference>
<dbReference type="HOGENOM" id="CLU_000691_0_2_1"/>
<dbReference type="InParanoid" id="Q9LPC5"/>
<dbReference type="OMA" id="MFMIFTT"/>
<dbReference type="PhylomeDB" id="Q9LPC5"/>
<dbReference type="PRO" id="PR:Q9LPC5"/>
<dbReference type="Proteomes" id="UP000006548">
    <property type="component" value="Chromosome 1"/>
</dbReference>
<dbReference type="ExpressionAtlas" id="Q9LPC5">
    <property type="expression patterns" value="baseline and differential"/>
</dbReference>
<dbReference type="GO" id="GO:0005829">
    <property type="term" value="C:cytosol"/>
    <property type="evidence" value="ECO:0007005"/>
    <property type="project" value="TAIR"/>
</dbReference>
<dbReference type="GO" id="GO:0032588">
    <property type="term" value="C:trans-Golgi network membrane"/>
    <property type="evidence" value="ECO:0000314"/>
    <property type="project" value="TAIR"/>
</dbReference>
<dbReference type="GO" id="GO:0005085">
    <property type="term" value="F:guanyl-nucleotide exchange factor activity"/>
    <property type="evidence" value="ECO:0007669"/>
    <property type="project" value="UniProtKB-KW"/>
</dbReference>
<dbReference type="GO" id="GO:0009561">
    <property type="term" value="P:megagametogenesis"/>
    <property type="evidence" value="ECO:0000315"/>
    <property type="project" value="TAIR"/>
</dbReference>
<dbReference type="GO" id="GO:0015031">
    <property type="term" value="P:protein transport"/>
    <property type="evidence" value="ECO:0007669"/>
    <property type="project" value="UniProtKB-KW"/>
</dbReference>
<dbReference type="GO" id="GO:0032012">
    <property type="term" value="P:regulation of ARF protein signal transduction"/>
    <property type="evidence" value="ECO:0007669"/>
    <property type="project" value="InterPro"/>
</dbReference>
<dbReference type="GO" id="GO:0016192">
    <property type="term" value="P:vesicle-mediated transport"/>
    <property type="evidence" value="ECO:0000315"/>
    <property type="project" value="TAIR"/>
</dbReference>
<dbReference type="CDD" id="cd00171">
    <property type="entry name" value="Sec7"/>
    <property type="match status" value="1"/>
</dbReference>
<dbReference type="FunFam" id="1.10.1000.11:FF:000005">
    <property type="entry name" value="Brefeldin A-inhibited guanine nucleotide-exchange 1"/>
    <property type="match status" value="1"/>
</dbReference>
<dbReference type="FunFam" id="1.10.220.20:FF:000002">
    <property type="entry name" value="Brefeldin A-inhibited guanine nucleotide-exchange protein 1"/>
    <property type="match status" value="1"/>
</dbReference>
<dbReference type="Gene3D" id="1.10.220.20">
    <property type="match status" value="1"/>
</dbReference>
<dbReference type="Gene3D" id="1.10.1000.11">
    <property type="entry name" value="Arf Nucleotide-binding Site Opener,domain 2"/>
    <property type="match status" value="1"/>
</dbReference>
<dbReference type="InterPro" id="IPR016024">
    <property type="entry name" value="ARM-type_fold"/>
</dbReference>
<dbReference type="InterPro" id="IPR032629">
    <property type="entry name" value="DCB_dom"/>
</dbReference>
<dbReference type="InterPro" id="IPR015403">
    <property type="entry name" value="Mon2/Sec7/BIG1-like_HDS"/>
</dbReference>
<dbReference type="InterPro" id="IPR032691">
    <property type="entry name" value="Mon2/Sec7/BIG1-like_HUS"/>
</dbReference>
<dbReference type="InterPro" id="IPR032817">
    <property type="entry name" value="Mon2_C"/>
</dbReference>
<dbReference type="InterPro" id="IPR046455">
    <property type="entry name" value="Sec7/BIG1-like_C"/>
</dbReference>
<dbReference type="InterPro" id="IPR023394">
    <property type="entry name" value="Sec7_C_sf"/>
</dbReference>
<dbReference type="InterPro" id="IPR000904">
    <property type="entry name" value="Sec7_dom"/>
</dbReference>
<dbReference type="InterPro" id="IPR035999">
    <property type="entry name" value="Sec7_dom_sf"/>
</dbReference>
<dbReference type="PANTHER" id="PTHR10663">
    <property type="entry name" value="GUANYL-NUCLEOTIDE EXCHANGE FACTOR"/>
    <property type="match status" value="1"/>
</dbReference>
<dbReference type="PANTHER" id="PTHR10663:SF375">
    <property type="entry name" value="LD29171P"/>
    <property type="match status" value="1"/>
</dbReference>
<dbReference type="Pfam" id="PF20252">
    <property type="entry name" value="BIG2_C"/>
    <property type="match status" value="1"/>
</dbReference>
<dbReference type="Pfam" id="PF16213">
    <property type="entry name" value="DCB"/>
    <property type="match status" value="1"/>
</dbReference>
<dbReference type="Pfam" id="PF16206">
    <property type="entry name" value="Mon2_C"/>
    <property type="match status" value="1"/>
</dbReference>
<dbReference type="Pfam" id="PF01369">
    <property type="entry name" value="Sec7"/>
    <property type="match status" value="1"/>
</dbReference>
<dbReference type="Pfam" id="PF09324">
    <property type="entry name" value="Sec7-like_HDS"/>
    <property type="match status" value="1"/>
</dbReference>
<dbReference type="Pfam" id="PF12783">
    <property type="entry name" value="Sec7-like_HUS"/>
    <property type="match status" value="1"/>
</dbReference>
<dbReference type="SMART" id="SM00222">
    <property type="entry name" value="Sec7"/>
    <property type="match status" value="1"/>
</dbReference>
<dbReference type="SUPFAM" id="SSF48371">
    <property type="entry name" value="ARM repeat"/>
    <property type="match status" value="1"/>
</dbReference>
<dbReference type="SUPFAM" id="SSF48425">
    <property type="entry name" value="Sec7 domain"/>
    <property type="match status" value="1"/>
</dbReference>
<dbReference type="PROSITE" id="PS50190">
    <property type="entry name" value="SEC7"/>
    <property type="match status" value="1"/>
</dbReference>
<protein>
    <recommendedName>
        <fullName>Brefeldin A-inhibited guanine nucleotide-exchange protein 3</fullName>
        <shortName>BIG3</shortName>
    </recommendedName>
    <alternativeName>
        <fullName>ARF guanine-nucleotide exchange factor BIG3</fullName>
    </alternativeName>
    <alternativeName>
        <fullName>Protein EMBRYO SAC DEVELOPMENT ARREST 10</fullName>
    </alternativeName>
</protein>
<accession>Q9LPC5</accession>
<comment type="function">
    <text evidence="1 5">Activates the ARF proteins by exchanging bound GDP for free GTP. Plays a role in vesicular protein sorting (By similarity). Involved both in the nuclear division phase and in the nuclear fusion phase.</text>
</comment>
<comment type="activity regulation">
    <text evidence="1">Inhibited by brefeldin A.</text>
</comment>
<comment type="subunit">
    <text evidence="1">Homodimer.</text>
</comment>
<comment type="subcellular location">
    <subcellularLocation>
        <location evidence="1">Cytoplasm</location>
        <location evidence="1">Cytosol</location>
    </subcellularLocation>
    <subcellularLocation>
        <location evidence="1">Membrane</location>
        <topology evidence="1">Peripheral membrane protein</topology>
        <orientation evidence="1">Cytoplasmic side</orientation>
    </subcellularLocation>
    <text evidence="1">Soluble and partially membrane-bound.</text>
</comment>
<comment type="disruption phenotype">
    <text evidence="5">Abnormal nuclear numbers and positions. No embryo sac.</text>
</comment>
<proteinExistence type="evidence at protein level"/>
<keyword id="KW-0007">Acetylation</keyword>
<keyword id="KW-0963">Cytoplasm</keyword>
<keyword id="KW-0344">Guanine-nucleotide releasing factor</keyword>
<keyword id="KW-0472">Membrane</keyword>
<keyword id="KW-0597">Phosphoprotein</keyword>
<keyword id="KW-0653">Protein transport</keyword>
<keyword id="KW-1185">Reference proteome</keyword>
<keyword id="KW-0813">Transport</keyword>